<gene>
    <name evidence="1" type="primary">atpG</name>
    <name type="ordered locus">CMS1925</name>
</gene>
<proteinExistence type="inferred from homology"/>
<accession>B0RED5</accession>
<protein>
    <recommendedName>
        <fullName evidence="1">ATP synthase gamma chain</fullName>
    </recommendedName>
    <alternativeName>
        <fullName evidence="1">ATP synthase F1 sector gamma subunit</fullName>
    </alternativeName>
    <alternativeName>
        <fullName evidence="1">F-ATPase gamma subunit</fullName>
    </alternativeName>
</protein>
<name>ATPG_CLASE</name>
<organism>
    <name type="scientific">Clavibacter sepedonicus</name>
    <name type="common">Clavibacter michiganensis subsp. sepedonicus</name>
    <dbReference type="NCBI Taxonomy" id="31964"/>
    <lineage>
        <taxon>Bacteria</taxon>
        <taxon>Bacillati</taxon>
        <taxon>Actinomycetota</taxon>
        <taxon>Actinomycetes</taxon>
        <taxon>Micrococcales</taxon>
        <taxon>Microbacteriaceae</taxon>
        <taxon>Clavibacter</taxon>
    </lineage>
</organism>
<reference key="1">
    <citation type="journal article" date="2008" name="J. Bacteriol.">
        <title>Genome of the actinomycete plant pathogen Clavibacter michiganensis subsp. sepedonicus suggests recent niche adaptation.</title>
        <authorList>
            <person name="Bentley S.D."/>
            <person name="Corton C."/>
            <person name="Brown S.E."/>
            <person name="Barron A."/>
            <person name="Clark L."/>
            <person name="Doggett J."/>
            <person name="Harris B."/>
            <person name="Ormond D."/>
            <person name="Quail M.A."/>
            <person name="May G."/>
            <person name="Francis D."/>
            <person name="Knudson D."/>
            <person name="Parkhill J."/>
            <person name="Ishimaru C.A."/>
        </authorList>
    </citation>
    <scope>NUCLEOTIDE SEQUENCE [LARGE SCALE GENOMIC DNA]</scope>
    <source>
        <strain>ATCC 33113 / DSM 20744 / JCM 9667 / LMG 2889 / ICMP 2535 / C-1</strain>
    </source>
</reference>
<comment type="function">
    <text evidence="1">Produces ATP from ADP in the presence of a proton gradient across the membrane. The gamma chain is believed to be important in regulating ATPase activity and the flow of protons through the CF(0) complex.</text>
</comment>
<comment type="subunit">
    <text evidence="1">F-type ATPases have 2 components, CF(1) - the catalytic core - and CF(0) - the membrane proton channel. CF(1) has five subunits: alpha(3), beta(3), gamma(1), delta(1), epsilon(1). CF(0) has three main subunits: a, b and c.</text>
</comment>
<comment type="subcellular location">
    <subcellularLocation>
        <location evidence="1">Cell membrane</location>
        <topology evidence="1">Peripheral membrane protein</topology>
    </subcellularLocation>
</comment>
<comment type="similarity">
    <text evidence="1">Belongs to the ATPase gamma chain family.</text>
</comment>
<dbReference type="EMBL" id="AM849034">
    <property type="protein sequence ID" value="CAQ02027.1"/>
    <property type="molecule type" value="Genomic_DNA"/>
</dbReference>
<dbReference type="RefSeq" id="WP_012299258.1">
    <property type="nucleotide sequence ID" value="NZ_MZMN01000003.1"/>
</dbReference>
<dbReference type="SMR" id="B0RED5"/>
<dbReference type="STRING" id="31964.CMS1925"/>
<dbReference type="KEGG" id="cms:CMS1925"/>
<dbReference type="eggNOG" id="COG0224">
    <property type="taxonomic scope" value="Bacteria"/>
</dbReference>
<dbReference type="HOGENOM" id="CLU_050669_0_0_11"/>
<dbReference type="OrthoDB" id="9812769at2"/>
<dbReference type="Proteomes" id="UP000001318">
    <property type="component" value="Chromosome"/>
</dbReference>
<dbReference type="GO" id="GO:0005886">
    <property type="term" value="C:plasma membrane"/>
    <property type="evidence" value="ECO:0007669"/>
    <property type="project" value="UniProtKB-SubCell"/>
</dbReference>
<dbReference type="GO" id="GO:0045259">
    <property type="term" value="C:proton-transporting ATP synthase complex"/>
    <property type="evidence" value="ECO:0007669"/>
    <property type="project" value="UniProtKB-KW"/>
</dbReference>
<dbReference type="GO" id="GO:0005524">
    <property type="term" value="F:ATP binding"/>
    <property type="evidence" value="ECO:0007669"/>
    <property type="project" value="UniProtKB-UniRule"/>
</dbReference>
<dbReference type="GO" id="GO:0046933">
    <property type="term" value="F:proton-transporting ATP synthase activity, rotational mechanism"/>
    <property type="evidence" value="ECO:0007669"/>
    <property type="project" value="UniProtKB-UniRule"/>
</dbReference>
<dbReference type="GO" id="GO:0042777">
    <property type="term" value="P:proton motive force-driven plasma membrane ATP synthesis"/>
    <property type="evidence" value="ECO:0007669"/>
    <property type="project" value="UniProtKB-UniRule"/>
</dbReference>
<dbReference type="CDD" id="cd12151">
    <property type="entry name" value="F1-ATPase_gamma"/>
    <property type="match status" value="1"/>
</dbReference>
<dbReference type="Gene3D" id="3.40.1380.10">
    <property type="match status" value="1"/>
</dbReference>
<dbReference type="Gene3D" id="1.10.287.80">
    <property type="entry name" value="ATP synthase, gamma subunit, helix hairpin domain"/>
    <property type="match status" value="1"/>
</dbReference>
<dbReference type="HAMAP" id="MF_00815">
    <property type="entry name" value="ATP_synth_gamma_bact"/>
    <property type="match status" value="1"/>
</dbReference>
<dbReference type="InterPro" id="IPR035968">
    <property type="entry name" value="ATP_synth_F1_ATPase_gsu"/>
</dbReference>
<dbReference type="InterPro" id="IPR000131">
    <property type="entry name" value="ATP_synth_F1_gsu"/>
</dbReference>
<dbReference type="NCBIfam" id="TIGR01146">
    <property type="entry name" value="ATPsyn_F1gamma"/>
    <property type="match status" value="1"/>
</dbReference>
<dbReference type="NCBIfam" id="NF004145">
    <property type="entry name" value="PRK05621.1-2"/>
    <property type="match status" value="1"/>
</dbReference>
<dbReference type="PANTHER" id="PTHR11693">
    <property type="entry name" value="ATP SYNTHASE GAMMA CHAIN"/>
    <property type="match status" value="1"/>
</dbReference>
<dbReference type="PANTHER" id="PTHR11693:SF22">
    <property type="entry name" value="ATP SYNTHASE SUBUNIT GAMMA, MITOCHONDRIAL"/>
    <property type="match status" value="1"/>
</dbReference>
<dbReference type="Pfam" id="PF00231">
    <property type="entry name" value="ATP-synt"/>
    <property type="match status" value="1"/>
</dbReference>
<dbReference type="PRINTS" id="PR00126">
    <property type="entry name" value="ATPASEGAMMA"/>
</dbReference>
<dbReference type="SUPFAM" id="SSF52943">
    <property type="entry name" value="ATP synthase (F1-ATPase), gamma subunit"/>
    <property type="match status" value="1"/>
</dbReference>
<keyword id="KW-0066">ATP synthesis</keyword>
<keyword id="KW-1003">Cell membrane</keyword>
<keyword id="KW-0139">CF(1)</keyword>
<keyword id="KW-0375">Hydrogen ion transport</keyword>
<keyword id="KW-0406">Ion transport</keyword>
<keyword id="KW-0472">Membrane</keyword>
<keyword id="KW-0813">Transport</keyword>
<sequence>MGAQLRVYTQKIKSAQTTKKITRAMELISASRIQKAQQRMAASAPYSRAVTRAVSAVATFSNVDHILTTEPEKVERAAIVIFASDRGLAGAFSSSVLKESEQLAELLRSQGKEIVYYLVGRKAVGYFKFRKRDSERIWTGSTEKPEFETAKSIGDALVEKFVTPASEGGVDEIHIVFNRFVSIATQKPEVVRLLPLEVVEGVEAPVEGAVLPLYEFEPEVGDVLDALLPVYIESRIFNAMLQSAASEHAARQKAMKSASDNADKLVTTYTRLRNNARQTEITQQISEIVGGADALASSK</sequence>
<evidence type="ECO:0000255" key="1">
    <source>
        <dbReference type="HAMAP-Rule" id="MF_00815"/>
    </source>
</evidence>
<feature type="chain" id="PRO_1000083778" description="ATP synthase gamma chain">
    <location>
        <begin position="1"/>
        <end position="299"/>
    </location>
</feature>